<dbReference type="EMBL" id="AP008232">
    <property type="protein sequence ID" value="BAE73312.1"/>
    <property type="molecule type" value="Genomic_DNA"/>
</dbReference>
<dbReference type="RefSeq" id="WP_011409902.1">
    <property type="nucleotide sequence ID" value="NC_007712.1"/>
</dbReference>
<dbReference type="SMR" id="Q2NX13"/>
<dbReference type="STRING" id="343509.SG0037"/>
<dbReference type="KEGG" id="sgl:SG0037"/>
<dbReference type="eggNOG" id="COG1706">
    <property type="taxonomic scope" value="Bacteria"/>
</dbReference>
<dbReference type="HOGENOM" id="CLU_045235_1_0_6"/>
<dbReference type="OrthoDB" id="9786431at2"/>
<dbReference type="Proteomes" id="UP000001932">
    <property type="component" value="Chromosome"/>
</dbReference>
<dbReference type="GO" id="GO:0009428">
    <property type="term" value="C:bacterial-type flagellum basal body, distal rod, P ring"/>
    <property type="evidence" value="ECO:0007669"/>
    <property type="project" value="InterPro"/>
</dbReference>
<dbReference type="GO" id="GO:0030288">
    <property type="term" value="C:outer membrane-bounded periplasmic space"/>
    <property type="evidence" value="ECO:0007669"/>
    <property type="project" value="InterPro"/>
</dbReference>
<dbReference type="GO" id="GO:0005198">
    <property type="term" value="F:structural molecule activity"/>
    <property type="evidence" value="ECO:0007669"/>
    <property type="project" value="InterPro"/>
</dbReference>
<dbReference type="GO" id="GO:0071973">
    <property type="term" value="P:bacterial-type flagellum-dependent cell motility"/>
    <property type="evidence" value="ECO:0007669"/>
    <property type="project" value="InterPro"/>
</dbReference>
<dbReference type="HAMAP" id="MF_00416">
    <property type="entry name" value="FlgI"/>
    <property type="match status" value="1"/>
</dbReference>
<dbReference type="InterPro" id="IPR001782">
    <property type="entry name" value="Flag_FlgI"/>
</dbReference>
<dbReference type="NCBIfam" id="NF003676">
    <property type="entry name" value="PRK05303.1"/>
    <property type="match status" value="1"/>
</dbReference>
<dbReference type="PANTHER" id="PTHR30381">
    <property type="entry name" value="FLAGELLAR P-RING PERIPLASMIC PROTEIN FLGI"/>
    <property type="match status" value="1"/>
</dbReference>
<dbReference type="PANTHER" id="PTHR30381:SF0">
    <property type="entry name" value="FLAGELLAR P-RING PROTEIN"/>
    <property type="match status" value="1"/>
</dbReference>
<dbReference type="Pfam" id="PF02119">
    <property type="entry name" value="FlgI"/>
    <property type="match status" value="1"/>
</dbReference>
<dbReference type="PRINTS" id="PR01010">
    <property type="entry name" value="FLGPRINGFLGI"/>
</dbReference>
<name>FLGI_SODGM</name>
<sequence length="365" mass="37777">MMLSLCAIAGLLLAPSIQAERIRDLTTVLGVRENALIGYGLVVGLDGTGDQTTQTPFTTQSLRNMLSQLGVAVPTGTNMQLKNVAAVMVTAKLPAFARAGQKIDVVVSSLGSAKSLRGGTLLMTPLKGVDNQVYALAQGNILVSGSGAQAGGNRVQVNQLNGGRISGGAIVERSVPADFAGGNVIMLQLNNDDFSLAQQISDAINRHFGHRSALPLDSRTINVAVPPDGPGKVRFLASLQNIPITLGPTDAVVVINSRTGSVVMNRDVVLGSCAVAHGELTVEVNRTYKVSQPDTPFGGGRTVVVPETAINVRNEGGALQQIDAGANLNDVVSALNGIGATPNDLMAILQSMQSTGCLNAKLEIN</sequence>
<accession>Q2NX13</accession>
<reference key="1">
    <citation type="journal article" date="2006" name="Genome Res.">
        <title>Massive genome erosion and functional adaptations provide insights into the symbiotic lifestyle of Sodalis glossinidius in the tsetse host.</title>
        <authorList>
            <person name="Toh H."/>
            <person name="Weiss B.L."/>
            <person name="Perkin S.A.H."/>
            <person name="Yamashita A."/>
            <person name="Oshima K."/>
            <person name="Hattori M."/>
            <person name="Aksoy S."/>
        </authorList>
    </citation>
    <scope>NUCLEOTIDE SEQUENCE [LARGE SCALE GENOMIC DNA]</scope>
    <source>
        <strain>morsitans</strain>
    </source>
</reference>
<gene>
    <name evidence="1" type="primary">flgI</name>
    <name type="ordered locus">SG0037</name>
</gene>
<comment type="function">
    <text evidence="1">Assembles around the rod to form the L-ring and probably protects the motor/basal body from shearing forces during rotation.</text>
</comment>
<comment type="subunit">
    <text evidence="1">The basal body constitutes a major portion of the flagellar organelle and consists of four rings (L,P,S, and M) mounted on a central rod.</text>
</comment>
<comment type="subcellular location">
    <subcellularLocation>
        <location evidence="1">Periplasm</location>
    </subcellularLocation>
    <subcellularLocation>
        <location evidence="1">Bacterial flagellum basal body</location>
    </subcellularLocation>
</comment>
<comment type="similarity">
    <text evidence="1">Belongs to the FlgI family.</text>
</comment>
<keyword id="KW-0975">Bacterial flagellum</keyword>
<keyword id="KW-0574">Periplasm</keyword>
<keyword id="KW-0732">Signal</keyword>
<proteinExistence type="inferred from homology"/>
<evidence type="ECO:0000255" key="1">
    <source>
        <dbReference type="HAMAP-Rule" id="MF_00416"/>
    </source>
</evidence>
<protein>
    <recommendedName>
        <fullName evidence="1">Flagellar P-ring protein</fullName>
    </recommendedName>
    <alternativeName>
        <fullName evidence="1">Basal body P-ring protein</fullName>
    </alternativeName>
</protein>
<organism>
    <name type="scientific">Sodalis glossinidius (strain morsitans)</name>
    <dbReference type="NCBI Taxonomy" id="343509"/>
    <lineage>
        <taxon>Bacteria</taxon>
        <taxon>Pseudomonadati</taxon>
        <taxon>Pseudomonadota</taxon>
        <taxon>Gammaproteobacteria</taxon>
        <taxon>Enterobacterales</taxon>
        <taxon>Bruguierivoracaceae</taxon>
        <taxon>Sodalis</taxon>
    </lineage>
</organism>
<feature type="signal peptide" evidence="1">
    <location>
        <begin position="1"/>
        <end position="19"/>
    </location>
</feature>
<feature type="chain" id="PRO_0000236321" description="Flagellar P-ring protein">
    <location>
        <begin position="20"/>
        <end position="365"/>
    </location>
</feature>